<keyword id="KW-0169">Cobalamin biosynthesis</keyword>
<keyword id="KW-0413">Isomerase</keyword>
<evidence type="ECO:0000250" key="1"/>
<evidence type="ECO:0000269" key="2">
    <source>
    </source>
</evidence>
<evidence type="ECO:0000305" key="3"/>
<dbReference type="EC" id="5.4.99.60"/>
<dbReference type="EMBL" id="AJ000758">
    <property type="protein sequence ID" value="CAA04310.1"/>
    <property type="molecule type" value="Genomic_DNA"/>
</dbReference>
<dbReference type="PIR" id="T44686">
    <property type="entry name" value="T44686"/>
</dbReference>
<dbReference type="SMR" id="O87692"/>
<dbReference type="BioCyc" id="MetaCyc:MONOMER-18417"/>
<dbReference type="UniPathway" id="UPA00148">
    <property type="reaction ID" value="UER00230"/>
</dbReference>
<dbReference type="GO" id="GO:0043778">
    <property type="term" value="F:cobalt-precorrin-8 methylmutase activity"/>
    <property type="evidence" value="ECO:0007669"/>
    <property type="project" value="UniProtKB-EC"/>
</dbReference>
<dbReference type="GO" id="GO:0016993">
    <property type="term" value="F:precorrin-8X methylmutase activity"/>
    <property type="evidence" value="ECO:0007669"/>
    <property type="project" value="InterPro"/>
</dbReference>
<dbReference type="GO" id="GO:0009236">
    <property type="term" value="P:cobalamin biosynthetic process"/>
    <property type="evidence" value="ECO:0007669"/>
    <property type="project" value="UniProtKB-UniPathway"/>
</dbReference>
<dbReference type="Gene3D" id="3.40.50.10230">
    <property type="entry name" value="Cobalamin biosynthesis CobH/CbiC, precorrin-8X methylmutase"/>
    <property type="match status" value="1"/>
</dbReference>
<dbReference type="InterPro" id="IPR003722">
    <property type="entry name" value="Cbl_synth_CobH/CbiC"/>
</dbReference>
<dbReference type="InterPro" id="IPR036588">
    <property type="entry name" value="CobH/CbiC_sf"/>
</dbReference>
<dbReference type="PANTHER" id="PTHR43588">
    <property type="entry name" value="COBALT-PRECORRIN-8 METHYLMUTASE"/>
    <property type="match status" value="1"/>
</dbReference>
<dbReference type="PANTHER" id="PTHR43588:SF1">
    <property type="entry name" value="COBALT-PRECORRIN-8 METHYLMUTASE"/>
    <property type="match status" value="1"/>
</dbReference>
<dbReference type="Pfam" id="PF02570">
    <property type="entry name" value="CbiC"/>
    <property type="match status" value="1"/>
</dbReference>
<dbReference type="SUPFAM" id="SSF63965">
    <property type="entry name" value="Precorrin-8X methylmutase CbiC/CobH"/>
    <property type="match status" value="1"/>
</dbReference>
<proteinExistence type="evidence at protein level"/>
<name>CBIC_PRIMG</name>
<accession>O87692</accession>
<gene>
    <name type="primary">cbiC</name>
</gene>
<comment type="function">
    <text evidence="2">Catalyzes the conversion of cobalt-precorrin-8 to cobyrinate.</text>
</comment>
<comment type="catalytic activity">
    <reaction evidence="2">
        <text>Co-precorrin-8X = cob(II)yrinate</text>
        <dbReference type="Rhea" id="RHEA:16209"/>
        <dbReference type="ChEBI" id="CHEBI:58894"/>
        <dbReference type="ChEBI" id="CHEBI:70792"/>
        <dbReference type="EC" id="5.4.99.60"/>
    </reaction>
</comment>
<comment type="pathway">
    <text>Cofactor biosynthesis; adenosylcobalamin biosynthesis; cob(II)yrinate a,c-diamide from sirohydrochlorin (anaerobic route): step 9/10.</text>
</comment>
<comment type="subunit">
    <text evidence="1">Homodimer.</text>
</comment>
<comment type="similarity">
    <text evidence="3">Belongs to the CobH/CbiC family.</text>
</comment>
<reference key="1">
    <citation type="journal article" date="1998" name="Biochem. J.">
        <title>Cobalamin (vitamin B12) biosynthesis: identification and characterization of a Bacillus megaterium cobI operon.</title>
        <authorList>
            <person name="Raux E."/>
            <person name="Lanois A."/>
            <person name="Warren M.J."/>
            <person name="Rambach A."/>
            <person name="Thermes C."/>
        </authorList>
    </citation>
    <scope>NUCLEOTIDE SEQUENCE [GENOMIC DNA]</scope>
    <source>
        <strain>DSM 509 / CCM 1464 / NBRC 12109</strain>
    </source>
</reference>
<reference key="2">
    <citation type="journal article" date="2013" name="Proc. Natl. Acad. Sci. U.S.A.">
        <title>Elucidation of the anaerobic pathway for the corrin component of cobalamin (vitamin B12).</title>
        <authorList>
            <person name="Moore S.J."/>
            <person name="Lawrence A.D."/>
            <person name="Biedendieck R."/>
            <person name="Deery E."/>
            <person name="Frank S."/>
            <person name="Howard M.J."/>
            <person name="Rigby S.E."/>
            <person name="Warren M.J."/>
        </authorList>
    </citation>
    <scope>FUNCTION</scope>
    <scope>CATALYTIC ACTIVITY</scope>
</reference>
<protein>
    <recommendedName>
        <fullName>Cobalt-precorrin-8 methylmutase</fullName>
        <ecNumber>5.4.99.60</ecNumber>
    </recommendedName>
    <alternativeName>
        <fullName>Cobalt-precorrin isomerase</fullName>
    </alternativeName>
</protein>
<feature type="chain" id="PRO_0000430344" description="Cobalt-precorrin-8 methylmutase">
    <location>
        <begin position="1"/>
        <end position="225"/>
    </location>
</feature>
<feature type="active site" description="Proton donor/acceptor" evidence="1">
    <location>
        <position position="47"/>
    </location>
</feature>
<feature type="binding site" evidence="1">
    <location>
        <position position="21"/>
    </location>
    <ligand>
        <name>substrate</name>
    </ligand>
</feature>
<feature type="binding site" evidence="1">
    <location>
        <position position="44"/>
    </location>
    <ligand>
        <name>substrate</name>
    </ligand>
</feature>
<organism>
    <name type="scientific">Priestia megaterium</name>
    <name type="common">Bacillus megaterium</name>
    <dbReference type="NCBI Taxonomy" id="1404"/>
    <lineage>
        <taxon>Bacteria</taxon>
        <taxon>Bacillati</taxon>
        <taxon>Bacillota</taxon>
        <taxon>Bacilli</taxon>
        <taxon>Bacillales</taxon>
        <taxon>Bacillaceae</taxon>
        <taxon>Priestia</taxon>
    </lineage>
</organism>
<sequence>MDFRTEFKPLTVQPQQIEGKSFEMITEELGPHPFTDEQYPIVQRVIHRSADFELGRSMLFHPDAIQAGIKAIRSGKQVVADVQMVQVGTNKQRIEKHGGEIKVYISDSDVMEEAKRLNTTRAIISMRKAIKEADGGIFAIGNAPTALLELIRLIKEGEAKPGLVIGLPVGFVSAAESKEELAKLYVPFITNIGRKGGSTVTVAALNAISILADSGVTYEGSAKRT</sequence>